<comment type="function">
    <text evidence="1">The coatomer is a cytosolic protein complex that binds to dilysine motifs and reversibly associates with Golgi non-clathrin-coated vesicles, which further mediate biosynthetic protein transport from the ER, via the Golgi up to the trans Golgi network. Coatomer complex is required for budding from Golgi membranes, and is essential for the retrograde Golgi-to-ER transport of dilysine-tagged proteins (By similarity).</text>
</comment>
<comment type="subunit">
    <text evidence="1">Oligomeric complex that consists of at least the alpha, beta, beta', gamma, delta, epsilon and zeta subunits.</text>
</comment>
<comment type="subcellular location">
    <subcellularLocation>
        <location evidence="1">Cytoplasm</location>
    </subcellularLocation>
    <subcellularLocation>
        <location evidence="1">Golgi apparatus membrane</location>
        <topology evidence="1">Peripheral membrane protein</topology>
        <orientation evidence="1">Cytoplasmic side</orientation>
    </subcellularLocation>
    <subcellularLocation>
        <location evidence="1">Cytoplasmic vesicle</location>
        <location evidence="1">COPI-coated vesicle membrane</location>
        <topology evidence="1">Peripheral membrane protein</topology>
        <orientation evidence="1">Cytoplasmic side</orientation>
    </subcellularLocation>
    <text evidence="1">The coatomer is cytoplasmic or polymerized on the cytoplasmic side of the Golgi, as well as on the vesicles/buds originating from it.</text>
</comment>
<reference key="1">
    <citation type="journal article" date="2005" name="BMC Biol.">
        <title>The sequence of rice chromosomes 11 and 12, rich in disease resistance genes and recent gene duplications.</title>
        <authorList>
            <consortium name="The rice chromosomes 11 and 12 sequencing consortia"/>
        </authorList>
    </citation>
    <scope>NUCLEOTIDE SEQUENCE [LARGE SCALE GENOMIC DNA]</scope>
    <source>
        <strain>cv. Nipponbare</strain>
    </source>
</reference>
<reference key="2">
    <citation type="journal article" date="2005" name="Nature">
        <title>The map-based sequence of the rice genome.</title>
        <authorList>
            <consortium name="International rice genome sequencing project (IRGSP)"/>
        </authorList>
    </citation>
    <scope>NUCLEOTIDE SEQUENCE [LARGE SCALE GENOMIC DNA]</scope>
    <source>
        <strain>cv. Nipponbare</strain>
    </source>
</reference>
<reference key="3">
    <citation type="journal article" date="2008" name="Nucleic Acids Res.">
        <title>The rice annotation project database (RAP-DB): 2008 update.</title>
        <authorList>
            <consortium name="The rice annotation project (RAP)"/>
        </authorList>
    </citation>
    <scope>GENOME REANNOTATION</scope>
    <source>
        <strain>cv. Nipponbare</strain>
    </source>
</reference>
<reference key="4">
    <citation type="journal article" date="2013" name="Rice">
        <title>Improvement of the Oryza sativa Nipponbare reference genome using next generation sequence and optical map data.</title>
        <authorList>
            <person name="Kawahara Y."/>
            <person name="de la Bastide M."/>
            <person name="Hamilton J.P."/>
            <person name="Kanamori H."/>
            <person name="McCombie W.R."/>
            <person name="Ouyang S."/>
            <person name="Schwartz D.C."/>
            <person name="Tanaka T."/>
            <person name="Wu J."/>
            <person name="Zhou S."/>
            <person name="Childs K.L."/>
            <person name="Davidson R.M."/>
            <person name="Lin H."/>
            <person name="Quesada-Ocampo L."/>
            <person name="Vaillancourt B."/>
            <person name="Sakai H."/>
            <person name="Lee S.S."/>
            <person name="Kim J."/>
            <person name="Numa H."/>
            <person name="Itoh T."/>
            <person name="Buell C.R."/>
            <person name="Matsumoto T."/>
        </authorList>
    </citation>
    <scope>GENOME REANNOTATION</scope>
    <source>
        <strain>cv. Nipponbare</strain>
    </source>
</reference>
<reference key="5">
    <citation type="journal article" date="2005" name="PLoS Biol.">
        <title>The genomes of Oryza sativa: a history of duplications.</title>
        <authorList>
            <person name="Yu J."/>
            <person name="Wang J."/>
            <person name="Lin W."/>
            <person name="Li S."/>
            <person name="Li H."/>
            <person name="Zhou J."/>
            <person name="Ni P."/>
            <person name="Dong W."/>
            <person name="Hu S."/>
            <person name="Zeng C."/>
            <person name="Zhang J."/>
            <person name="Zhang Y."/>
            <person name="Li R."/>
            <person name="Xu Z."/>
            <person name="Li S."/>
            <person name="Li X."/>
            <person name="Zheng H."/>
            <person name="Cong L."/>
            <person name="Lin L."/>
            <person name="Yin J."/>
            <person name="Geng J."/>
            <person name="Li G."/>
            <person name="Shi J."/>
            <person name="Liu J."/>
            <person name="Lv H."/>
            <person name="Li J."/>
            <person name="Wang J."/>
            <person name="Deng Y."/>
            <person name="Ran L."/>
            <person name="Shi X."/>
            <person name="Wang X."/>
            <person name="Wu Q."/>
            <person name="Li C."/>
            <person name="Ren X."/>
            <person name="Wang J."/>
            <person name="Wang X."/>
            <person name="Li D."/>
            <person name="Liu D."/>
            <person name="Zhang X."/>
            <person name="Ji Z."/>
            <person name="Zhao W."/>
            <person name="Sun Y."/>
            <person name="Zhang Z."/>
            <person name="Bao J."/>
            <person name="Han Y."/>
            <person name="Dong L."/>
            <person name="Ji J."/>
            <person name="Chen P."/>
            <person name="Wu S."/>
            <person name="Liu J."/>
            <person name="Xiao Y."/>
            <person name="Bu D."/>
            <person name="Tan J."/>
            <person name="Yang L."/>
            <person name="Ye C."/>
            <person name="Zhang J."/>
            <person name="Xu J."/>
            <person name="Zhou Y."/>
            <person name="Yu Y."/>
            <person name="Zhang B."/>
            <person name="Zhuang S."/>
            <person name="Wei H."/>
            <person name="Liu B."/>
            <person name="Lei M."/>
            <person name="Yu H."/>
            <person name="Li Y."/>
            <person name="Xu H."/>
            <person name="Wei S."/>
            <person name="He X."/>
            <person name="Fang L."/>
            <person name="Zhang Z."/>
            <person name="Zhang Y."/>
            <person name="Huang X."/>
            <person name="Su Z."/>
            <person name="Tong W."/>
            <person name="Li J."/>
            <person name="Tong Z."/>
            <person name="Li S."/>
            <person name="Ye J."/>
            <person name="Wang L."/>
            <person name="Fang L."/>
            <person name="Lei T."/>
            <person name="Chen C.-S."/>
            <person name="Chen H.-C."/>
            <person name="Xu Z."/>
            <person name="Li H."/>
            <person name="Huang H."/>
            <person name="Zhang F."/>
            <person name="Xu H."/>
            <person name="Li N."/>
            <person name="Zhao C."/>
            <person name="Li S."/>
            <person name="Dong L."/>
            <person name="Huang Y."/>
            <person name="Li L."/>
            <person name="Xi Y."/>
            <person name="Qi Q."/>
            <person name="Li W."/>
            <person name="Zhang B."/>
            <person name="Hu W."/>
            <person name="Zhang Y."/>
            <person name="Tian X."/>
            <person name="Jiao Y."/>
            <person name="Liang X."/>
            <person name="Jin J."/>
            <person name="Gao L."/>
            <person name="Zheng W."/>
            <person name="Hao B."/>
            <person name="Liu S.-M."/>
            <person name="Wang W."/>
            <person name="Yuan L."/>
            <person name="Cao M."/>
            <person name="McDermott J."/>
            <person name="Samudrala R."/>
            <person name="Wang J."/>
            <person name="Wong G.K.-S."/>
            <person name="Yang H."/>
        </authorList>
    </citation>
    <scope>NUCLEOTIDE SEQUENCE [LARGE SCALE GENOMIC DNA]</scope>
    <source>
        <strain>cv. Nipponbare</strain>
    </source>
</reference>
<reference key="6">
    <citation type="journal article" date="2003" name="Science">
        <title>Collection, mapping, and annotation of over 28,000 cDNA clones from japonica rice.</title>
        <authorList>
            <consortium name="The rice full-length cDNA consortium"/>
        </authorList>
    </citation>
    <scope>NUCLEOTIDE SEQUENCE [LARGE SCALE MRNA]</scope>
    <source>
        <strain>cv. Nipponbare</strain>
    </source>
</reference>
<accession>Q53PC7</accession>
<accession>A0A0P0XZH3</accession>
<accession>A3C942</accession>
<accession>B9G9M8</accession>
<accession>Q0IU95</accession>
<dbReference type="EMBL" id="AC120539">
    <property type="protein sequence ID" value="AAX95778.1"/>
    <property type="molecule type" value="Genomic_DNA"/>
</dbReference>
<dbReference type="EMBL" id="AC123897">
    <property type="protein sequence ID" value="AAX93023.1"/>
    <property type="molecule type" value="Genomic_DNA"/>
</dbReference>
<dbReference type="EMBL" id="DP000010">
    <property type="protein sequence ID" value="ABA91740.1"/>
    <property type="molecule type" value="Genomic_DNA"/>
</dbReference>
<dbReference type="EMBL" id="AP008217">
    <property type="protein sequence ID" value="BAF27720.2"/>
    <property type="molecule type" value="Genomic_DNA"/>
</dbReference>
<dbReference type="EMBL" id="AP014967">
    <property type="protein sequence ID" value="BAT12894.1"/>
    <property type="molecule type" value="Genomic_DNA"/>
</dbReference>
<dbReference type="EMBL" id="CM000148">
    <property type="protein sequence ID" value="EEE51734.1"/>
    <property type="molecule type" value="Genomic_DNA"/>
</dbReference>
<dbReference type="EMBL" id="AK069716">
    <property type="status" value="NOT_ANNOTATED_CDS"/>
    <property type="molecule type" value="mRNA"/>
</dbReference>
<dbReference type="RefSeq" id="XP_015616972.1">
    <property type="nucleotide sequence ID" value="XM_015761486.1"/>
</dbReference>
<dbReference type="SMR" id="Q53PC7"/>
<dbReference type="BioGRID" id="818950">
    <property type="interactions" value="1"/>
</dbReference>
<dbReference type="FunCoup" id="Q53PC7">
    <property type="interactions" value="3689"/>
</dbReference>
<dbReference type="STRING" id="39947.Q53PC7"/>
<dbReference type="PaxDb" id="39947-Q53PC7"/>
<dbReference type="EnsemblPlants" id="Os11t0174000-01">
    <property type="protein sequence ID" value="Os11t0174000-01"/>
    <property type="gene ID" value="Os11g0174000"/>
</dbReference>
<dbReference type="EnsemblPlants" id="Os11t0174000-03">
    <property type="protein sequence ID" value="Os11t0174000-03"/>
    <property type="gene ID" value="Os11g0174000"/>
</dbReference>
<dbReference type="Gramene" id="Os11t0174000-01">
    <property type="protein sequence ID" value="Os11t0174000-01"/>
    <property type="gene ID" value="Os11g0174000"/>
</dbReference>
<dbReference type="Gramene" id="Os11t0174000-03">
    <property type="protein sequence ID" value="Os11t0174000-03"/>
    <property type="gene ID" value="Os11g0174000"/>
</dbReference>
<dbReference type="KEGG" id="dosa:Os11g0174000"/>
<dbReference type="eggNOG" id="KOG1058">
    <property type="taxonomic scope" value="Eukaryota"/>
</dbReference>
<dbReference type="HOGENOM" id="CLU_006949_0_0_1"/>
<dbReference type="InParanoid" id="Q53PC7"/>
<dbReference type="OMA" id="IYKNFDW"/>
<dbReference type="OrthoDB" id="10261439at2759"/>
<dbReference type="Proteomes" id="UP000000763">
    <property type="component" value="Chromosome 11"/>
</dbReference>
<dbReference type="Proteomes" id="UP000007752">
    <property type="component" value="Chromosome 11"/>
</dbReference>
<dbReference type="Proteomes" id="UP000059680">
    <property type="component" value="Chromosome 11"/>
</dbReference>
<dbReference type="ExpressionAtlas" id="Q53PC7">
    <property type="expression patterns" value="baseline and differential"/>
</dbReference>
<dbReference type="GO" id="GO:0030126">
    <property type="term" value="C:COPI vesicle coat"/>
    <property type="evidence" value="ECO:0000318"/>
    <property type="project" value="GO_Central"/>
</dbReference>
<dbReference type="GO" id="GO:0000139">
    <property type="term" value="C:Golgi membrane"/>
    <property type="evidence" value="ECO:0007669"/>
    <property type="project" value="UniProtKB-SubCell"/>
</dbReference>
<dbReference type="GO" id="GO:0005198">
    <property type="term" value="F:structural molecule activity"/>
    <property type="evidence" value="ECO:0007669"/>
    <property type="project" value="InterPro"/>
</dbReference>
<dbReference type="GO" id="GO:0006888">
    <property type="term" value="P:endoplasmic reticulum to Golgi vesicle-mediated transport"/>
    <property type="evidence" value="ECO:0000318"/>
    <property type="project" value="GO_Central"/>
</dbReference>
<dbReference type="GO" id="GO:0006891">
    <property type="term" value="P:intra-Golgi vesicle-mediated transport"/>
    <property type="evidence" value="ECO:0000318"/>
    <property type="project" value="GO_Central"/>
</dbReference>
<dbReference type="GO" id="GO:0006886">
    <property type="term" value="P:intracellular protein transport"/>
    <property type="evidence" value="ECO:0007669"/>
    <property type="project" value="InterPro"/>
</dbReference>
<dbReference type="FunFam" id="1.25.10.10:FF:000166">
    <property type="entry name" value="Coatomer subunit beta"/>
    <property type="match status" value="1"/>
</dbReference>
<dbReference type="Gene3D" id="1.25.10.10">
    <property type="entry name" value="Leucine-rich Repeat Variant"/>
    <property type="match status" value="1"/>
</dbReference>
<dbReference type="InterPro" id="IPR011989">
    <property type="entry name" value="ARM-like"/>
</dbReference>
<dbReference type="InterPro" id="IPR016024">
    <property type="entry name" value="ARM-type_fold"/>
</dbReference>
<dbReference type="InterPro" id="IPR002553">
    <property type="entry name" value="Clathrin/coatomer_adapt-like_N"/>
</dbReference>
<dbReference type="InterPro" id="IPR011710">
    <property type="entry name" value="Coatomer_bsu_C"/>
</dbReference>
<dbReference type="InterPro" id="IPR016460">
    <property type="entry name" value="COPB1"/>
</dbReference>
<dbReference type="InterPro" id="IPR029446">
    <property type="entry name" value="COPB1_appendage_platform_dom"/>
</dbReference>
<dbReference type="PANTHER" id="PTHR10635">
    <property type="entry name" value="COATOMER SUBUNIT BETA"/>
    <property type="match status" value="1"/>
</dbReference>
<dbReference type="PANTHER" id="PTHR10635:SF1">
    <property type="entry name" value="COATOMER SUBUNIT BETA-1"/>
    <property type="match status" value="1"/>
</dbReference>
<dbReference type="Pfam" id="PF01602">
    <property type="entry name" value="Adaptin_N"/>
    <property type="match status" value="1"/>
</dbReference>
<dbReference type="Pfam" id="PF07718">
    <property type="entry name" value="Coatamer_beta_C"/>
    <property type="match status" value="1"/>
</dbReference>
<dbReference type="Pfam" id="PF14806">
    <property type="entry name" value="Coatomer_b_Cpla"/>
    <property type="match status" value="1"/>
</dbReference>
<dbReference type="PIRSF" id="PIRSF005727">
    <property type="entry name" value="Coatomer_beta_subunit"/>
    <property type="match status" value="1"/>
</dbReference>
<dbReference type="SUPFAM" id="SSF48371">
    <property type="entry name" value="ARM repeat"/>
    <property type="match status" value="1"/>
</dbReference>
<evidence type="ECO:0000250" key="1"/>
<evidence type="ECO:0000305" key="2"/>
<feature type="chain" id="PRO_0000285618" description="Coatomer subunit beta-1">
    <location>
        <begin position="1"/>
        <end position="953"/>
    </location>
</feature>
<feature type="repeat" description="HEAT 1">
    <location>
        <begin position="49"/>
        <end position="87"/>
    </location>
</feature>
<feature type="repeat" description="HEAT 2">
    <location>
        <begin position="93"/>
        <end position="127"/>
    </location>
</feature>
<feature type="repeat" description="HEAT 3">
    <location>
        <begin position="128"/>
        <end position="165"/>
    </location>
</feature>
<feature type="repeat" description="HEAT 4">
    <location>
        <begin position="314"/>
        <end position="351"/>
    </location>
</feature>
<feature type="repeat" description="HEAT 5">
    <location>
        <begin position="393"/>
        <end position="430"/>
    </location>
</feature>
<feature type="sequence conflict" description="In Ref. 6; AK069716." evidence="2" ref="6">
    <original>E</original>
    <variation>G</variation>
    <location>
        <position position="653"/>
    </location>
</feature>
<organism>
    <name type="scientific">Oryza sativa subsp. japonica</name>
    <name type="common">Rice</name>
    <dbReference type="NCBI Taxonomy" id="39947"/>
    <lineage>
        <taxon>Eukaryota</taxon>
        <taxon>Viridiplantae</taxon>
        <taxon>Streptophyta</taxon>
        <taxon>Embryophyta</taxon>
        <taxon>Tracheophyta</taxon>
        <taxon>Spermatophyta</taxon>
        <taxon>Magnoliopsida</taxon>
        <taxon>Liliopsida</taxon>
        <taxon>Poales</taxon>
        <taxon>Poaceae</taxon>
        <taxon>BOP clade</taxon>
        <taxon>Oryzoideae</taxon>
        <taxon>Oryzeae</taxon>
        <taxon>Oryzinae</taxon>
        <taxon>Oryza</taxon>
        <taxon>Oryza sativa</taxon>
    </lineage>
</organism>
<proteinExistence type="evidence at transcript level"/>
<name>COPB1_ORYSJ</name>
<gene>
    <name type="ordered locus">Os11g0174000</name>
    <name type="ordered locus">LOC_Os11g07280</name>
    <name type="ORF">OsJ_031814</name>
    <name type="ORF">OsJ_33144</name>
    <name type="ORF">OSJNBa0055G24</name>
    <name type="ORF">OSJNBb0063D09</name>
</gene>
<sequence>MEKPCTLLVHFDKGSPSMANEIKADLEGSDVAAKVDAMKRAIMLLLNGETLPHLFITVVRYVLPSEDHTIQKLLLLYLEIVDKRDVASGKVLPEMILICQNLRNNLQHPNEYIRGVTLRFLCRLNEPELLEPLIPSILANLDHRHHFIRRHALSAISAIYRLPHGDQLLPDAPEVVERALTGEQDASARRNGFLMLCACAQERAVAYLLTNAERVAEWPDLLQMAAVDLIRKVCRSPNRADKGRYIKIIISLLSAPNSAVVYESAGALVSLSSAPTAVRAAANTYCQLLSSQSDNNVKLIVLDRLHELRASHRDVMVDVVMDVLRALSSPNVDVRRKVLDLVLDLLTPRNVEEVVMYLKKEVVKTQAGDLEKGGEYRQMLVQAIHSCAVEYPEVAGSVVHLLMDFLGDTNVAAAVDVVLFVREIIETNPKLRVSMIQRLIDTFYQIRASRVCSCALWILGEYSLSLSEVESAISTIKQCLGDLPFYTVSEEGESTDASKPAQPVVNSVTVSSRRPVVLADGTYATQSAATETAISSPAVAPGSLSSTQNLRSLILSGDFFLAAVVACTLTKLVLRLEEVQPSKAEANKASTGALLIMVSILQLGQSSYLPHPIDNDSYDRIVLCVRLLCNTGDDVRKVWLQSCRQSFTKMLAEKQFRETEEMKAKAQISHAQPDDLIDFYHLKSRRGMSQLELEDAVQDDLKAATGEFTKDADDANRLNRILQLTGFSDPVYAEAYVTVHHYDIVLDVTVINRTKETLQNLCLELATMGDLKLVDRPQNYTLAPESSKQIRANIKVSSTETGVIFGNIVYETSNVMERSVVVLNDIHIDIMDYISPATCADVAFRNMWAEFEWENKVAVNTVIQDEKEFLDHIIKSTNMKCLTPPSALDGECGFIAANLYAKSVFGEDALVNISVEKQADGKLSGYIRIRSKTQGIALSLGDKITLKQKGGSS</sequence>
<keyword id="KW-0963">Cytoplasm</keyword>
<keyword id="KW-0968">Cytoplasmic vesicle</keyword>
<keyword id="KW-0931">ER-Golgi transport</keyword>
<keyword id="KW-0333">Golgi apparatus</keyword>
<keyword id="KW-0472">Membrane</keyword>
<keyword id="KW-0653">Protein transport</keyword>
<keyword id="KW-1185">Reference proteome</keyword>
<keyword id="KW-0677">Repeat</keyword>
<keyword id="KW-0813">Transport</keyword>
<protein>
    <recommendedName>
        <fullName>Coatomer subunit beta-1</fullName>
    </recommendedName>
    <alternativeName>
        <fullName>Beta-coat protein 1</fullName>
        <shortName>Beta-COP 1</shortName>
    </alternativeName>
</protein>